<dbReference type="EMBL" id="AK314983">
    <property type="protein sequence ID" value="BAG37482.1"/>
    <property type="status" value="ALT_INIT"/>
    <property type="molecule type" value="mRNA"/>
</dbReference>
<dbReference type="EMBL" id="AC073343">
    <property type="status" value="NOT_ANNOTATED_CDS"/>
    <property type="molecule type" value="Genomic_DNA"/>
</dbReference>
<dbReference type="EMBL" id="BC034495">
    <property type="protein sequence ID" value="AAH34495.2"/>
    <property type="molecule type" value="mRNA"/>
</dbReference>
<dbReference type="EMBL" id="BC044242">
    <property type="protein sequence ID" value="AAH44242.1"/>
    <property type="molecule type" value="mRNA"/>
</dbReference>
<dbReference type="EMBL" id="BC157864">
    <property type="protein sequence ID" value="AAI57865.1"/>
    <property type="molecule type" value="mRNA"/>
</dbReference>
<dbReference type="EMBL" id="BC157871">
    <property type="protein sequence ID" value="AAI57872.1"/>
    <property type="molecule type" value="mRNA"/>
</dbReference>
<dbReference type="CCDS" id="CCDS43552.1">
    <molecule id="B2RC85-1"/>
</dbReference>
<dbReference type="RefSeq" id="NP_001093167.1">
    <molecule id="B2RC85-1"/>
    <property type="nucleotide sequence ID" value="NM_001099697.2"/>
</dbReference>
<dbReference type="RefSeq" id="NP_775836.3">
    <property type="nucleotide sequence ID" value="NM_173565.3"/>
</dbReference>
<dbReference type="RefSeq" id="XP_024302671.1">
    <molecule id="B2RC85-1"/>
    <property type="nucleotide sequence ID" value="XM_024446903.2"/>
</dbReference>
<dbReference type="SMR" id="B2RC85"/>
<dbReference type="BioGRID" id="128823">
    <property type="interactions" value="3"/>
</dbReference>
<dbReference type="BioGRID" id="608628">
    <property type="interactions" value="8"/>
</dbReference>
<dbReference type="FunCoup" id="B2RC85">
    <property type="interactions" value="1"/>
</dbReference>
<dbReference type="IntAct" id="B2RC85">
    <property type="interactions" value="1"/>
</dbReference>
<dbReference type="STRING" id="9606.ENSP00000384766"/>
<dbReference type="iPTMnet" id="B2RC85"/>
<dbReference type="PhosphoSitePlus" id="B2RC85"/>
<dbReference type="BioMuta" id="RSPH10B2"/>
<dbReference type="jPOST" id="B2RC85"/>
<dbReference type="MassIVE" id="B2RC85"/>
<dbReference type="PaxDb" id="9606-ENSP00000384766"/>
<dbReference type="PeptideAtlas" id="B2RC85"/>
<dbReference type="ProteomicsDB" id="3422">
    <molecule id="B2RC85-1"/>
</dbReference>
<dbReference type="Antibodypedia" id="76939">
    <property type="antibodies" value="2 antibodies from 2 providers"/>
</dbReference>
<dbReference type="DNASU" id="222967"/>
<dbReference type="DNASU" id="728194"/>
<dbReference type="Ensembl" id="ENST00000297186.7">
    <molecule id="B2RC85-1"/>
    <property type="protein sequence ID" value="ENSP00000297186.3"/>
    <property type="gene ID" value="ENSG00000169402.16"/>
</dbReference>
<dbReference type="Ensembl" id="ENST00000403107.5">
    <molecule id="B2RC85-1"/>
    <property type="protein sequence ID" value="ENSP00000384766.1"/>
    <property type="gene ID" value="ENSG00000169402.16"/>
</dbReference>
<dbReference type="Ensembl" id="ENST00000404077.6">
    <molecule id="B2RC85-1"/>
    <property type="protein sequence ID" value="ENSP00000386102.1"/>
    <property type="gene ID" value="ENSG00000169402.16"/>
</dbReference>
<dbReference type="GeneID" id="728194"/>
<dbReference type="KEGG" id="hsa:222967"/>
<dbReference type="KEGG" id="hsa:728194"/>
<dbReference type="MANE-Select" id="ENST00000404077.6">
    <property type="protein sequence ID" value="ENSP00000386102.1"/>
    <property type="RefSeq nucleotide sequence ID" value="NM_001099697.2"/>
    <property type="RefSeq protein sequence ID" value="NP_001093167.1"/>
</dbReference>
<dbReference type="UCSC" id="uc003sqw.1">
    <molecule id="B2RC85-1"/>
    <property type="organism name" value="human"/>
</dbReference>
<dbReference type="AGR" id="HGNC:27362"/>
<dbReference type="AGR" id="HGNC:34385"/>
<dbReference type="CTD" id="222967"/>
<dbReference type="CTD" id="728194"/>
<dbReference type="GeneCards" id="RSPH10B2"/>
<dbReference type="HGNC" id="HGNC:34385">
    <property type="gene designation" value="RSPH10B2"/>
</dbReference>
<dbReference type="HPA" id="ENSG00000169402">
    <property type="expression patterns" value="Tissue enhanced (fallopian tube, testis)"/>
</dbReference>
<dbReference type="neXtProt" id="NX_B2RC85"/>
<dbReference type="OpenTargets" id="ENSG00000155026"/>
<dbReference type="OpenTargets" id="ENSG00000169402"/>
<dbReference type="PharmGKB" id="PA162402247"/>
<dbReference type="VEuPathDB" id="HostDB:ENSG00000169402"/>
<dbReference type="eggNOG" id="KOG0231">
    <property type="taxonomic scope" value="Eukaryota"/>
</dbReference>
<dbReference type="GeneTree" id="ENSGT00940000159899"/>
<dbReference type="HOGENOM" id="CLU_012108_1_0_1"/>
<dbReference type="InParanoid" id="B2RC85"/>
<dbReference type="OMA" id="PNACHVK"/>
<dbReference type="OrthoDB" id="294378at2759"/>
<dbReference type="PAN-GO" id="B2RC85">
    <property type="GO annotations" value="0 GO annotations based on evolutionary models"/>
</dbReference>
<dbReference type="PhylomeDB" id="B2RC85"/>
<dbReference type="TreeFam" id="TF328649"/>
<dbReference type="PathwayCommons" id="B2RC85"/>
<dbReference type="SignaLink" id="B2RC85"/>
<dbReference type="BioGRID-ORCS" id="222967">
    <property type="hits" value="22 hits in 997 CRISPR screens"/>
</dbReference>
<dbReference type="BioGRID-ORCS" id="728194">
    <property type="hits" value="58 hits in 1030 CRISPR screens"/>
</dbReference>
<dbReference type="ChiTaRS" id="RSPH10B2">
    <property type="organism name" value="human"/>
</dbReference>
<dbReference type="GeneWiki" id="RSPH10B"/>
<dbReference type="Pharos" id="B2RC85">
    <property type="development level" value="Tdark"/>
</dbReference>
<dbReference type="PRO" id="PR:B2RC85"/>
<dbReference type="Proteomes" id="UP000005640">
    <property type="component" value="Chromosome 7"/>
</dbReference>
<dbReference type="RNAct" id="B2RC85">
    <property type="molecule type" value="protein"/>
</dbReference>
<dbReference type="Bgee" id="ENSG00000169402">
    <property type="expression patterns" value="Expressed in right uterine tube and 96 other cell types or tissues"/>
</dbReference>
<dbReference type="ExpressionAtlas" id="B2RC85">
    <property type="expression patterns" value="baseline and differential"/>
</dbReference>
<dbReference type="GO" id="GO:0097729">
    <property type="term" value="C:9+2 motile cilium"/>
    <property type="evidence" value="ECO:0000250"/>
    <property type="project" value="UniProtKB"/>
</dbReference>
<dbReference type="GO" id="GO:0005929">
    <property type="term" value="C:cilium"/>
    <property type="evidence" value="ECO:0000314"/>
    <property type="project" value="UniProtKB"/>
</dbReference>
<dbReference type="GO" id="GO:0005737">
    <property type="term" value="C:cytoplasm"/>
    <property type="evidence" value="ECO:0007669"/>
    <property type="project" value="UniProtKB-KW"/>
</dbReference>
<dbReference type="GO" id="GO:0005856">
    <property type="term" value="C:cytoskeleton"/>
    <property type="evidence" value="ECO:0007669"/>
    <property type="project" value="UniProtKB-KW"/>
</dbReference>
<dbReference type="GO" id="GO:0036126">
    <property type="term" value="C:sperm flagellum"/>
    <property type="evidence" value="ECO:0000314"/>
    <property type="project" value="UniProtKB"/>
</dbReference>
<dbReference type="Gene3D" id="2.20.110.10">
    <property type="entry name" value="Histone H3 K4-specific methyltransferase SET7/9 N-terminal domain"/>
    <property type="match status" value="3"/>
</dbReference>
<dbReference type="InterPro" id="IPR003409">
    <property type="entry name" value="MORN"/>
</dbReference>
<dbReference type="PANTHER" id="PTHR46613">
    <property type="entry name" value="RADIAL SPOKE HEAD 10 HOMOLOG B-RELATED"/>
    <property type="match status" value="1"/>
</dbReference>
<dbReference type="PANTHER" id="PTHR46613:SF1">
    <property type="entry name" value="RADIAL SPOKE HEAD 10 HOMOLOG B-RELATED"/>
    <property type="match status" value="1"/>
</dbReference>
<dbReference type="Pfam" id="PF02493">
    <property type="entry name" value="MORN"/>
    <property type="match status" value="10"/>
</dbReference>
<dbReference type="SMART" id="SM00698">
    <property type="entry name" value="MORN"/>
    <property type="match status" value="9"/>
</dbReference>
<dbReference type="SUPFAM" id="SSF82185">
    <property type="entry name" value="Histone H3 K4-specific methyltransferase SET7/9 N-terminal domain"/>
    <property type="match status" value="3"/>
</dbReference>
<comment type="function">
    <text evidence="1">May function as part of the axonemal radial spoke complex 3 (RS3). Radial spoke complexes are important for ciliary motility.</text>
</comment>
<comment type="subunit">
    <text evidence="1">Interacts with RSPH6A. Does not appear to be part of the axonemal radial spoke complexes 1 or 2.</text>
</comment>
<comment type="subcellular location">
    <subcellularLocation>
        <location evidence="1">Cytoplasm</location>
        <location evidence="1">Cytoskeleton</location>
        <location evidence="1">Cilium axoneme</location>
    </subcellularLocation>
    <subcellularLocation>
        <location evidence="5">Cell projection</location>
        <location evidence="5">Cilium</location>
    </subcellularLocation>
    <subcellularLocation>
        <location evidence="5">Cell projection</location>
        <location evidence="5">Cilium</location>
        <location evidence="5">Flagellum</location>
    </subcellularLocation>
</comment>
<comment type="alternative products">
    <event type="alternative splicing"/>
    <isoform>
        <id>B2RC85-1</id>
        <name>1</name>
        <sequence type="displayed"/>
    </isoform>
    <isoform>
        <id>B2RC85-2</id>
        <name>2</name>
        <sequence type="described" ref="VSP_035277 VSP_035278 VSP_035279"/>
    </isoform>
</comment>
<comment type="sequence caution" evidence="7">
    <conflict type="erroneous initiation">
        <sequence resource="EMBL-CDS" id="BAG37482"/>
    </conflict>
    <text>Truncated N-terminus.</text>
</comment>
<keyword id="KW-0025">Alternative splicing</keyword>
<keyword id="KW-0966">Cell projection</keyword>
<keyword id="KW-0969">Cilium</keyword>
<keyword id="KW-0175">Coiled coil</keyword>
<keyword id="KW-0963">Cytoplasm</keyword>
<keyword id="KW-0206">Cytoskeleton</keyword>
<keyword id="KW-0282">Flagellum</keyword>
<keyword id="KW-1267">Proteomics identification</keyword>
<keyword id="KW-1185">Reference proteome</keyword>
<keyword id="KW-0677">Repeat</keyword>
<protein>
    <recommendedName>
        <fullName>Radial spoke head 10 homolog B2</fullName>
    </recommendedName>
</protein>
<organism>
    <name type="scientific">Homo sapiens</name>
    <name type="common">Human</name>
    <dbReference type="NCBI Taxonomy" id="9606"/>
    <lineage>
        <taxon>Eukaryota</taxon>
        <taxon>Metazoa</taxon>
        <taxon>Chordata</taxon>
        <taxon>Craniata</taxon>
        <taxon>Vertebrata</taxon>
        <taxon>Euteleostomi</taxon>
        <taxon>Mammalia</taxon>
        <taxon>Eutheria</taxon>
        <taxon>Euarchontoglires</taxon>
        <taxon>Primates</taxon>
        <taxon>Haplorrhini</taxon>
        <taxon>Catarrhini</taxon>
        <taxon>Hominidae</taxon>
        <taxon>Homo</taxon>
    </lineage>
</organism>
<gene>
    <name type="primary">RSPH10B2</name>
</gene>
<evidence type="ECO:0000250" key="1">
    <source>
        <dbReference type="UniProtKB" id="E9PYQ0"/>
    </source>
</evidence>
<evidence type="ECO:0000255" key="2"/>
<evidence type="ECO:0000256" key="3">
    <source>
        <dbReference type="SAM" id="MobiDB-lite"/>
    </source>
</evidence>
<evidence type="ECO:0000269" key="4">
    <source>
    </source>
</evidence>
<evidence type="ECO:0000269" key="5">
    <source>
    </source>
</evidence>
<evidence type="ECO:0000303" key="6">
    <source>
    </source>
</evidence>
<evidence type="ECO:0000305" key="7"/>
<reference key="1">
    <citation type="journal article" date="2004" name="Nat. Genet.">
        <title>Complete sequencing and characterization of 21,243 full-length human cDNAs.</title>
        <authorList>
            <person name="Ota T."/>
            <person name="Suzuki Y."/>
            <person name="Nishikawa T."/>
            <person name="Otsuki T."/>
            <person name="Sugiyama T."/>
            <person name="Irie R."/>
            <person name="Wakamatsu A."/>
            <person name="Hayashi K."/>
            <person name="Sato H."/>
            <person name="Nagai K."/>
            <person name="Kimura K."/>
            <person name="Makita H."/>
            <person name="Sekine M."/>
            <person name="Obayashi M."/>
            <person name="Nishi T."/>
            <person name="Shibahara T."/>
            <person name="Tanaka T."/>
            <person name="Ishii S."/>
            <person name="Yamamoto J."/>
            <person name="Saito K."/>
            <person name="Kawai Y."/>
            <person name="Isono Y."/>
            <person name="Nakamura Y."/>
            <person name="Nagahari K."/>
            <person name="Murakami K."/>
            <person name="Yasuda T."/>
            <person name="Iwayanagi T."/>
            <person name="Wagatsuma M."/>
            <person name="Shiratori A."/>
            <person name="Sudo H."/>
            <person name="Hosoiri T."/>
            <person name="Kaku Y."/>
            <person name="Kodaira H."/>
            <person name="Kondo H."/>
            <person name="Sugawara M."/>
            <person name="Takahashi M."/>
            <person name="Kanda K."/>
            <person name="Yokoi T."/>
            <person name="Furuya T."/>
            <person name="Kikkawa E."/>
            <person name="Omura Y."/>
            <person name="Abe K."/>
            <person name="Kamihara K."/>
            <person name="Katsuta N."/>
            <person name="Sato K."/>
            <person name="Tanikawa M."/>
            <person name="Yamazaki M."/>
            <person name="Ninomiya K."/>
            <person name="Ishibashi T."/>
            <person name="Yamashita H."/>
            <person name="Murakawa K."/>
            <person name="Fujimori K."/>
            <person name="Tanai H."/>
            <person name="Kimata M."/>
            <person name="Watanabe M."/>
            <person name="Hiraoka S."/>
            <person name="Chiba Y."/>
            <person name="Ishida S."/>
            <person name="Ono Y."/>
            <person name="Takiguchi S."/>
            <person name="Watanabe S."/>
            <person name="Yosida M."/>
            <person name="Hotuta T."/>
            <person name="Kusano J."/>
            <person name="Kanehori K."/>
            <person name="Takahashi-Fujii A."/>
            <person name="Hara H."/>
            <person name="Tanase T.-O."/>
            <person name="Nomura Y."/>
            <person name="Togiya S."/>
            <person name="Komai F."/>
            <person name="Hara R."/>
            <person name="Takeuchi K."/>
            <person name="Arita M."/>
            <person name="Imose N."/>
            <person name="Musashino K."/>
            <person name="Yuuki H."/>
            <person name="Oshima A."/>
            <person name="Sasaki N."/>
            <person name="Aotsuka S."/>
            <person name="Yoshikawa Y."/>
            <person name="Matsunawa H."/>
            <person name="Ichihara T."/>
            <person name="Shiohata N."/>
            <person name="Sano S."/>
            <person name="Moriya S."/>
            <person name="Momiyama H."/>
            <person name="Satoh N."/>
            <person name="Takami S."/>
            <person name="Terashima Y."/>
            <person name="Suzuki O."/>
            <person name="Nakagawa S."/>
            <person name="Senoh A."/>
            <person name="Mizoguchi H."/>
            <person name="Goto Y."/>
            <person name="Shimizu F."/>
            <person name="Wakebe H."/>
            <person name="Hishigaki H."/>
            <person name="Watanabe T."/>
            <person name="Sugiyama A."/>
            <person name="Takemoto M."/>
            <person name="Kawakami B."/>
            <person name="Yamazaki M."/>
            <person name="Watanabe K."/>
            <person name="Kumagai A."/>
            <person name="Itakura S."/>
            <person name="Fukuzumi Y."/>
            <person name="Fujimori Y."/>
            <person name="Komiyama M."/>
            <person name="Tashiro H."/>
            <person name="Tanigami A."/>
            <person name="Fujiwara T."/>
            <person name="Ono T."/>
            <person name="Yamada K."/>
            <person name="Fujii Y."/>
            <person name="Ozaki K."/>
            <person name="Hirao M."/>
            <person name="Ohmori Y."/>
            <person name="Kawabata A."/>
            <person name="Hikiji T."/>
            <person name="Kobatake N."/>
            <person name="Inagaki H."/>
            <person name="Ikema Y."/>
            <person name="Okamoto S."/>
            <person name="Okitani R."/>
            <person name="Kawakami T."/>
            <person name="Noguchi S."/>
            <person name="Itoh T."/>
            <person name="Shigeta K."/>
            <person name="Senba T."/>
            <person name="Matsumura K."/>
            <person name="Nakajima Y."/>
            <person name="Mizuno T."/>
            <person name="Morinaga M."/>
            <person name="Sasaki M."/>
            <person name="Togashi T."/>
            <person name="Oyama M."/>
            <person name="Hata H."/>
            <person name="Watanabe M."/>
            <person name="Komatsu T."/>
            <person name="Mizushima-Sugano J."/>
            <person name="Satoh T."/>
            <person name="Shirai Y."/>
            <person name="Takahashi Y."/>
            <person name="Nakagawa K."/>
            <person name="Okumura K."/>
            <person name="Nagase T."/>
            <person name="Nomura N."/>
            <person name="Kikuchi H."/>
            <person name="Masuho Y."/>
            <person name="Yamashita R."/>
            <person name="Nakai K."/>
            <person name="Yada T."/>
            <person name="Nakamura Y."/>
            <person name="Ohara O."/>
            <person name="Isogai T."/>
            <person name="Sugano S."/>
        </authorList>
    </citation>
    <scope>NUCLEOTIDE SEQUENCE [LARGE SCALE MRNA] (ISOFORM 1)</scope>
    <source>
        <tissue>Testis</tissue>
    </source>
</reference>
<reference key="2">
    <citation type="journal article" date="2003" name="Nature">
        <title>The DNA sequence of human chromosome 7.</title>
        <authorList>
            <person name="Hillier L.W."/>
            <person name="Fulton R.S."/>
            <person name="Fulton L.A."/>
            <person name="Graves T.A."/>
            <person name="Pepin K.H."/>
            <person name="Wagner-McPherson C."/>
            <person name="Layman D."/>
            <person name="Maas J."/>
            <person name="Jaeger S."/>
            <person name="Walker R."/>
            <person name="Wylie K."/>
            <person name="Sekhon M."/>
            <person name="Becker M.C."/>
            <person name="O'Laughlin M.D."/>
            <person name="Schaller M.E."/>
            <person name="Fewell G.A."/>
            <person name="Delehaunty K.D."/>
            <person name="Miner T.L."/>
            <person name="Nash W.E."/>
            <person name="Cordes M."/>
            <person name="Du H."/>
            <person name="Sun H."/>
            <person name="Edwards J."/>
            <person name="Bradshaw-Cordum H."/>
            <person name="Ali J."/>
            <person name="Andrews S."/>
            <person name="Isak A."/>
            <person name="Vanbrunt A."/>
            <person name="Nguyen C."/>
            <person name="Du F."/>
            <person name="Lamar B."/>
            <person name="Courtney L."/>
            <person name="Kalicki J."/>
            <person name="Ozersky P."/>
            <person name="Bielicki L."/>
            <person name="Scott K."/>
            <person name="Holmes A."/>
            <person name="Harkins R."/>
            <person name="Harris A."/>
            <person name="Strong C.M."/>
            <person name="Hou S."/>
            <person name="Tomlinson C."/>
            <person name="Dauphin-Kohlberg S."/>
            <person name="Kozlowicz-Reilly A."/>
            <person name="Leonard S."/>
            <person name="Rohlfing T."/>
            <person name="Rock S.M."/>
            <person name="Tin-Wollam A.-M."/>
            <person name="Abbott A."/>
            <person name="Minx P."/>
            <person name="Maupin R."/>
            <person name="Strowmatt C."/>
            <person name="Latreille P."/>
            <person name="Miller N."/>
            <person name="Johnson D."/>
            <person name="Murray J."/>
            <person name="Woessner J.P."/>
            <person name="Wendl M.C."/>
            <person name="Yang S.-P."/>
            <person name="Schultz B.R."/>
            <person name="Wallis J.W."/>
            <person name="Spieth J."/>
            <person name="Bieri T.A."/>
            <person name="Nelson J.O."/>
            <person name="Berkowicz N."/>
            <person name="Wohldmann P.E."/>
            <person name="Cook L.L."/>
            <person name="Hickenbotham M.T."/>
            <person name="Eldred J."/>
            <person name="Williams D."/>
            <person name="Bedell J.A."/>
            <person name="Mardis E.R."/>
            <person name="Clifton S.W."/>
            <person name="Chissoe S.L."/>
            <person name="Marra M.A."/>
            <person name="Raymond C."/>
            <person name="Haugen E."/>
            <person name="Gillett W."/>
            <person name="Zhou Y."/>
            <person name="James R."/>
            <person name="Phelps K."/>
            <person name="Iadanoto S."/>
            <person name="Bubb K."/>
            <person name="Simms E."/>
            <person name="Levy R."/>
            <person name="Clendenning J."/>
            <person name="Kaul R."/>
            <person name="Kent W.J."/>
            <person name="Furey T.S."/>
            <person name="Baertsch R.A."/>
            <person name="Brent M.R."/>
            <person name="Keibler E."/>
            <person name="Flicek P."/>
            <person name="Bork P."/>
            <person name="Suyama M."/>
            <person name="Bailey J.A."/>
            <person name="Portnoy M.E."/>
            <person name="Torrents D."/>
            <person name="Chinwalla A.T."/>
            <person name="Gish W.R."/>
            <person name="Eddy S.R."/>
            <person name="McPherson J.D."/>
            <person name="Olson M.V."/>
            <person name="Eichler E.E."/>
            <person name="Green E.D."/>
            <person name="Waterston R.H."/>
            <person name="Wilson R.K."/>
        </authorList>
    </citation>
    <scope>NUCLEOTIDE SEQUENCE [LARGE SCALE GENOMIC DNA]</scope>
</reference>
<reference key="3">
    <citation type="journal article" date="2004" name="Genome Res.">
        <title>The status, quality, and expansion of the NIH full-length cDNA project: the Mammalian Gene Collection (MGC).</title>
        <authorList>
            <consortium name="The MGC Project Team"/>
        </authorList>
    </citation>
    <scope>NUCLEOTIDE SEQUENCE [LARGE SCALE MRNA] (ISOFORMS 1 AND 2)</scope>
    <scope>VARIANT LYS-836</scope>
    <source>
        <tissue>Brain</tissue>
        <tissue>Testis</tissue>
    </source>
</reference>
<reference key="4">
    <citation type="journal article" date="2019" name="J. Proteome Res.">
        <title>Cell Type-Specific Expression of Testis Elevated Genes Based on Transcriptomics and Antibody-Based Proteomics.</title>
        <authorList>
            <person name="Pineau C."/>
            <person name="Hikmet F."/>
            <person name="Zhang C."/>
            <person name="Oksvold P."/>
            <person name="Chen S."/>
            <person name="Fagerberg L."/>
            <person name="Uhlen M."/>
            <person name="Lindskog C."/>
        </authorList>
    </citation>
    <scope>SUBCELLULAR LOCATION</scope>
</reference>
<proteinExistence type="evidence at protein level"/>
<name>R10B2_HUMAN</name>
<sequence>MVKEKKKADKKGEKSARSPSSLSDNLDFSKQDGNTTRQEMSPAGVPLLGMQLNEVKPKKDRQNVQQNEDASQYEESILTKLIVESYEGEKVRGLYEGEGFAAFQGGCTYRGMFSEGLMHGQGTYIWADGLKYEGDFVKNVPMNHGVYTWPDGSMYEGEVVNGMRNGFGMFKCSTQPVSYIGHWCNGKRHGKGSIYYNQEGTCWYEGDWVQNIKKGWGIRCYKSGNIYEGQWEDNMRHGEGRMRWLTTNEEYTGRWERGIQNGFGTHTWFLKRIRSSQYPLRNEYIGEFVNGYRHGRGKFYYASGAMYDGEWVSNKKHGMGRLTFKNGRVYEGAFSNDHIAGFPDLEVEFISCLDLSSGVAPRLSRSAELIRKLDGSESHSVLGSSIELDLNLLLDMYPETVQPEEKKQVEYAVLRNITELRRIYSFYSSLGCGHSLDNTFLMTKLHFWRFLKDCKFHHHKLTLADMDRILSANNDIPVEEIHSPFTTILLRTFLNYLLHLAYHIYHEEFQKRSPSLFLCFTKLMTENIRPNACQIKGNLFREQQRTLYSMSYMNKCWEIYLAYCRPSAAPPHEPTMKMRHFLWMLKDFKMINKELTAATFMEVIAEDNRFIYDGIDSNFEPELVFLEFFEALLSFAFICVTDQMTKSYTNVPADDVSGNKHETIYTILNQDAQNKSPSAVMSHESDAAHSDSARSSSSKLELSPDVNKIRKSEPKIKKSVSHERVSKMNFKLTGKGITFFSSESKKYERPKDDREEEFNTWVNNTYVFFVNTLFHAYKREEAIKEKIRADRLRSTAQAQQRKMEDDELEARLNIFILREEEAKRHDYEVDITVLKEPADVSSSHLILDPPKEDVTVSPSSKTITSKKKKK</sequence>
<feature type="chain" id="PRO_0000349254" description="Radial spoke head 10 homolog B2">
    <location>
        <begin position="1"/>
        <end position="870"/>
    </location>
</feature>
<feature type="repeat" description="MORN 1">
    <location>
        <begin position="86"/>
        <end position="108"/>
    </location>
</feature>
<feature type="repeat" description="MORN 2">
    <location>
        <begin position="109"/>
        <end position="131"/>
    </location>
</feature>
<feature type="repeat" description="MORN 3">
    <location>
        <begin position="132"/>
        <end position="154"/>
    </location>
</feature>
<feature type="repeat" description="MORN 4">
    <location>
        <begin position="155"/>
        <end position="177"/>
    </location>
</feature>
<feature type="repeat" description="MORN 5">
    <location>
        <begin position="179"/>
        <end position="201"/>
    </location>
</feature>
<feature type="repeat" description="MORN 6">
    <location>
        <begin position="204"/>
        <end position="226"/>
    </location>
</feature>
<feature type="repeat" description="MORN 7">
    <location>
        <begin position="227"/>
        <end position="249"/>
    </location>
</feature>
<feature type="repeat" description="MORN 8">
    <location>
        <begin position="251"/>
        <end position="273"/>
    </location>
</feature>
<feature type="repeat" description="MORN 9">
    <location>
        <begin position="284"/>
        <end position="306"/>
    </location>
</feature>
<feature type="repeat" description="MORN 10">
    <location>
        <begin position="307"/>
        <end position="329"/>
    </location>
</feature>
<feature type="region of interest" description="Disordered" evidence="3">
    <location>
        <begin position="1"/>
        <end position="44"/>
    </location>
</feature>
<feature type="region of interest" description="Disordered" evidence="3">
    <location>
        <begin position="674"/>
        <end position="704"/>
    </location>
</feature>
<feature type="region of interest" description="Disordered" evidence="3">
    <location>
        <begin position="840"/>
        <end position="870"/>
    </location>
</feature>
<feature type="coiled-coil region" evidence="2">
    <location>
        <begin position="784"/>
        <end position="811"/>
    </location>
</feature>
<feature type="compositionally biased region" description="Basic and acidic residues" evidence="3">
    <location>
        <begin position="1"/>
        <end position="16"/>
    </location>
</feature>
<feature type="compositionally biased region" description="Polar residues" evidence="3">
    <location>
        <begin position="17"/>
        <end position="39"/>
    </location>
</feature>
<feature type="compositionally biased region" description="Basic and acidic residues" evidence="3">
    <location>
        <begin position="683"/>
        <end position="692"/>
    </location>
</feature>
<feature type="compositionally biased region" description="Low complexity" evidence="3">
    <location>
        <begin position="693"/>
        <end position="703"/>
    </location>
</feature>
<feature type="splice variant" id="VSP_035277" description="In isoform 2." evidence="6">
    <location>
        <begin position="1"/>
        <end position="234"/>
    </location>
</feature>
<feature type="splice variant" id="VSP_035278" description="In isoform 2." evidence="6">
    <original>KRSP</original>
    <variation>QFIP</variation>
    <location>
        <begin position="511"/>
        <end position="514"/>
    </location>
</feature>
<feature type="splice variant" id="VSP_035279" description="In isoform 2." evidence="6">
    <location>
        <begin position="515"/>
        <end position="870"/>
    </location>
</feature>
<feature type="sequence variant" id="VAR_037357" description="In dbSNP:rs17855578." evidence="4">
    <original>E</original>
    <variation>K</variation>
    <location>
        <position position="836"/>
    </location>
</feature>
<feature type="sequence conflict" description="In Ref. 3; AAI57865." evidence="7" ref="3">
    <original>T</original>
    <variation>M</variation>
    <location>
        <position position="148"/>
    </location>
</feature>
<feature type="sequence conflict" description="In Ref. 3; AAH34495." evidence="7" ref="3">
    <original>M</original>
    <variation>I</variation>
    <location>
        <position position="550"/>
    </location>
</feature>
<feature type="sequence conflict" description="In Ref. 1; BAG37482." evidence="7" ref="1">
    <original>F</original>
    <variation>L</variation>
    <location>
        <position position="619"/>
    </location>
</feature>
<feature type="sequence conflict" description="In Ref. 1; BAG37482 and 3; AAH34495/AAI57865/AAI57872." evidence="7" ref="1 3">
    <original>T</original>
    <variation>M</variation>
    <location>
        <position position="765"/>
    </location>
</feature>
<accession>B2RC85</accession>
<accession>A6NMW7</accession>
<accession>B2RXI4</accession>
<accession>B2RXJ0</accession>
<accession>Q86ST9</accession>
<accession>Q8NE68</accession>